<accession>C1DCC3</accession>
<gene>
    <name evidence="1" type="primary">eno</name>
    <name type="ordered locus">LHK_00547</name>
</gene>
<reference key="1">
    <citation type="journal article" date="2009" name="PLoS Genet.">
        <title>The complete genome and proteome of Laribacter hongkongensis reveal potential mechanisms for adaptations to different temperatures and habitats.</title>
        <authorList>
            <person name="Woo P.C.Y."/>
            <person name="Lau S.K.P."/>
            <person name="Tse H."/>
            <person name="Teng J.L.L."/>
            <person name="Curreem S.O."/>
            <person name="Tsang A.K.L."/>
            <person name="Fan R.Y.Y."/>
            <person name="Wong G.K.M."/>
            <person name="Huang Y."/>
            <person name="Loman N.J."/>
            <person name="Snyder L.A.S."/>
            <person name="Cai J.J."/>
            <person name="Huang J.-D."/>
            <person name="Mak W."/>
            <person name="Pallen M.J."/>
            <person name="Lok S."/>
            <person name="Yuen K.-Y."/>
        </authorList>
    </citation>
    <scope>NUCLEOTIDE SEQUENCE [LARGE SCALE GENOMIC DNA]</scope>
    <source>
        <strain>HLHK9</strain>
    </source>
</reference>
<organism>
    <name type="scientific">Laribacter hongkongensis (strain HLHK9)</name>
    <dbReference type="NCBI Taxonomy" id="557598"/>
    <lineage>
        <taxon>Bacteria</taxon>
        <taxon>Pseudomonadati</taxon>
        <taxon>Pseudomonadota</taxon>
        <taxon>Betaproteobacteria</taxon>
        <taxon>Neisseriales</taxon>
        <taxon>Aquaspirillaceae</taxon>
        <taxon>Laribacter</taxon>
    </lineage>
</organism>
<proteinExistence type="inferred from homology"/>
<comment type="function">
    <text evidence="1">Catalyzes the reversible conversion of 2-phosphoglycerate (2-PG) into phosphoenolpyruvate (PEP). It is essential for the degradation of carbohydrates via glycolysis.</text>
</comment>
<comment type="catalytic activity">
    <reaction evidence="1">
        <text>(2R)-2-phosphoglycerate = phosphoenolpyruvate + H2O</text>
        <dbReference type="Rhea" id="RHEA:10164"/>
        <dbReference type="ChEBI" id="CHEBI:15377"/>
        <dbReference type="ChEBI" id="CHEBI:58289"/>
        <dbReference type="ChEBI" id="CHEBI:58702"/>
        <dbReference type="EC" id="4.2.1.11"/>
    </reaction>
</comment>
<comment type="cofactor">
    <cofactor evidence="1">
        <name>Mg(2+)</name>
        <dbReference type="ChEBI" id="CHEBI:18420"/>
    </cofactor>
    <text evidence="1">Binds a second Mg(2+) ion via substrate during catalysis.</text>
</comment>
<comment type="pathway">
    <text evidence="1">Carbohydrate degradation; glycolysis; pyruvate from D-glyceraldehyde 3-phosphate: step 4/5.</text>
</comment>
<comment type="subcellular location">
    <subcellularLocation>
        <location evidence="1">Cytoplasm</location>
    </subcellularLocation>
    <subcellularLocation>
        <location evidence="1">Secreted</location>
    </subcellularLocation>
    <subcellularLocation>
        <location evidence="1">Cell surface</location>
    </subcellularLocation>
    <text evidence="1">Fractions of enolase are present in both the cytoplasm and on the cell surface.</text>
</comment>
<comment type="similarity">
    <text evidence="1">Belongs to the enolase family.</text>
</comment>
<evidence type="ECO:0000255" key="1">
    <source>
        <dbReference type="HAMAP-Rule" id="MF_00318"/>
    </source>
</evidence>
<sequence length="427" mass="45704">MSSIVDVIAREILDSRGNPTVECDVWLDSGVMGRAAVPSGASTGEKEALELRDGDARRYLGKGVLKAVEHVNNEICEALIGLDPTDQAYIDQTLLELDGTDNKGSLGANAILAVSVAVAKAAALEVGLPLYRYLGGSGPMSLPVPMMNVINGGAHANNTLDIQEFMIMPVGARSFREALRCGAEIFHTLKKICADKGYSTAVGDEGGFAPNLARNEDAIKLILEATDKAGYVPGEDVLIALDCASSEFYKDGKYHLAGENLALSSEEFTNYLATLCDNYPIISIEDGMSEHDWAGWKLLTDKLGDKVQLVGDDVFVTNPAILAEGIKQGICNSLLVKINQIGSLSETLKAVDLAKRSGYTSVMSHRSGETEDSTIADLAVATNCMQIKTGSLSRSDRMAKYNQLLRIEEELGSAASYPGRAAFYHLK</sequence>
<name>ENO_LARHH</name>
<dbReference type="EC" id="4.2.1.11" evidence="1"/>
<dbReference type="EMBL" id="CP001154">
    <property type="protein sequence ID" value="ACO73540.1"/>
    <property type="molecule type" value="Genomic_DNA"/>
</dbReference>
<dbReference type="RefSeq" id="WP_012696032.1">
    <property type="nucleotide sequence ID" value="NC_012559.1"/>
</dbReference>
<dbReference type="SMR" id="C1DCC3"/>
<dbReference type="STRING" id="557598.LHK_00547"/>
<dbReference type="KEGG" id="lhk:LHK_00547"/>
<dbReference type="eggNOG" id="COG0148">
    <property type="taxonomic scope" value="Bacteria"/>
</dbReference>
<dbReference type="HOGENOM" id="CLU_031223_2_1_4"/>
<dbReference type="UniPathway" id="UPA00109">
    <property type="reaction ID" value="UER00187"/>
</dbReference>
<dbReference type="Proteomes" id="UP000002010">
    <property type="component" value="Chromosome"/>
</dbReference>
<dbReference type="GO" id="GO:0009986">
    <property type="term" value="C:cell surface"/>
    <property type="evidence" value="ECO:0007669"/>
    <property type="project" value="UniProtKB-SubCell"/>
</dbReference>
<dbReference type="GO" id="GO:0005576">
    <property type="term" value="C:extracellular region"/>
    <property type="evidence" value="ECO:0007669"/>
    <property type="project" value="UniProtKB-SubCell"/>
</dbReference>
<dbReference type="GO" id="GO:0000015">
    <property type="term" value="C:phosphopyruvate hydratase complex"/>
    <property type="evidence" value="ECO:0007669"/>
    <property type="project" value="InterPro"/>
</dbReference>
<dbReference type="GO" id="GO:0000287">
    <property type="term" value="F:magnesium ion binding"/>
    <property type="evidence" value="ECO:0007669"/>
    <property type="project" value="UniProtKB-UniRule"/>
</dbReference>
<dbReference type="GO" id="GO:0004634">
    <property type="term" value="F:phosphopyruvate hydratase activity"/>
    <property type="evidence" value="ECO:0007669"/>
    <property type="project" value="UniProtKB-UniRule"/>
</dbReference>
<dbReference type="GO" id="GO:0006096">
    <property type="term" value="P:glycolytic process"/>
    <property type="evidence" value="ECO:0007669"/>
    <property type="project" value="UniProtKB-UniRule"/>
</dbReference>
<dbReference type="CDD" id="cd03313">
    <property type="entry name" value="enolase"/>
    <property type="match status" value="1"/>
</dbReference>
<dbReference type="FunFam" id="3.20.20.120:FF:000001">
    <property type="entry name" value="Enolase"/>
    <property type="match status" value="1"/>
</dbReference>
<dbReference type="FunFam" id="3.30.390.10:FF:000001">
    <property type="entry name" value="Enolase"/>
    <property type="match status" value="1"/>
</dbReference>
<dbReference type="Gene3D" id="3.20.20.120">
    <property type="entry name" value="Enolase-like C-terminal domain"/>
    <property type="match status" value="1"/>
</dbReference>
<dbReference type="Gene3D" id="3.30.390.10">
    <property type="entry name" value="Enolase-like, N-terminal domain"/>
    <property type="match status" value="1"/>
</dbReference>
<dbReference type="HAMAP" id="MF_00318">
    <property type="entry name" value="Enolase"/>
    <property type="match status" value="1"/>
</dbReference>
<dbReference type="InterPro" id="IPR000941">
    <property type="entry name" value="Enolase"/>
</dbReference>
<dbReference type="InterPro" id="IPR036849">
    <property type="entry name" value="Enolase-like_C_sf"/>
</dbReference>
<dbReference type="InterPro" id="IPR029017">
    <property type="entry name" value="Enolase-like_N"/>
</dbReference>
<dbReference type="InterPro" id="IPR020810">
    <property type="entry name" value="Enolase_C"/>
</dbReference>
<dbReference type="InterPro" id="IPR020809">
    <property type="entry name" value="Enolase_CS"/>
</dbReference>
<dbReference type="InterPro" id="IPR020811">
    <property type="entry name" value="Enolase_N"/>
</dbReference>
<dbReference type="NCBIfam" id="TIGR01060">
    <property type="entry name" value="eno"/>
    <property type="match status" value="1"/>
</dbReference>
<dbReference type="PANTHER" id="PTHR11902">
    <property type="entry name" value="ENOLASE"/>
    <property type="match status" value="1"/>
</dbReference>
<dbReference type="PANTHER" id="PTHR11902:SF1">
    <property type="entry name" value="ENOLASE"/>
    <property type="match status" value="1"/>
</dbReference>
<dbReference type="Pfam" id="PF00113">
    <property type="entry name" value="Enolase_C"/>
    <property type="match status" value="1"/>
</dbReference>
<dbReference type="Pfam" id="PF03952">
    <property type="entry name" value="Enolase_N"/>
    <property type="match status" value="1"/>
</dbReference>
<dbReference type="PIRSF" id="PIRSF001400">
    <property type="entry name" value="Enolase"/>
    <property type="match status" value="1"/>
</dbReference>
<dbReference type="PRINTS" id="PR00148">
    <property type="entry name" value="ENOLASE"/>
</dbReference>
<dbReference type="SFLD" id="SFLDS00001">
    <property type="entry name" value="Enolase"/>
    <property type="match status" value="1"/>
</dbReference>
<dbReference type="SFLD" id="SFLDF00002">
    <property type="entry name" value="enolase"/>
    <property type="match status" value="1"/>
</dbReference>
<dbReference type="SMART" id="SM01192">
    <property type="entry name" value="Enolase_C"/>
    <property type="match status" value="1"/>
</dbReference>
<dbReference type="SMART" id="SM01193">
    <property type="entry name" value="Enolase_N"/>
    <property type="match status" value="1"/>
</dbReference>
<dbReference type="SUPFAM" id="SSF51604">
    <property type="entry name" value="Enolase C-terminal domain-like"/>
    <property type="match status" value="1"/>
</dbReference>
<dbReference type="SUPFAM" id="SSF54826">
    <property type="entry name" value="Enolase N-terminal domain-like"/>
    <property type="match status" value="1"/>
</dbReference>
<dbReference type="PROSITE" id="PS00164">
    <property type="entry name" value="ENOLASE"/>
    <property type="match status" value="1"/>
</dbReference>
<feature type="chain" id="PRO_1000189953" description="Enolase">
    <location>
        <begin position="1"/>
        <end position="427"/>
    </location>
</feature>
<feature type="active site" description="Proton donor" evidence="1">
    <location>
        <position position="205"/>
    </location>
</feature>
<feature type="active site" description="Proton acceptor" evidence="1">
    <location>
        <position position="337"/>
    </location>
</feature>
<feature type="binding site" evidence="1">
    <location>
        <position position="163"/>
    </location>
    <ligand>
        <name>(2R)-2-phosphoglycerate</name>
        <dbReference type="ChEBI" id="CHEBI:58289"/>
    </ligand>
</feature>
<feature type="binding site" evidence="1">
    <location>
        <position position="242"/>
    </location>
    <ligand>
        <name>Mg(2+)</name>
        <dbReference type="ChEBI" id="CHEBI:18420"/>
    </ligand>
</feature>
<feature type="binding site" evidence="1">
    <location>
        <position position="285"/>
    </location>
    <ligand>
        <name>Mg(2+)</name>
        <dbReference type="ChEBI" id="CHEBI:18420"/>
    </ligand>
</feature>
<feature type="binding site" evidence="1">
    <location>
        <position position="312"/>
    </location>
    <ligand>
        <name>Mg(2+)</name>
        <dbReference type="ChEBI" id="CHEBI:18420"/>
    </ligand>
</feature>
<feature type="binding site" evidence="1">
    <location>
        <position position="337"/>
    </location>
    <ligand>
        <name>(2R)-2-phosphoglycerate</name>
        <dbReference type="ChEBI" id="CHEBI:58289"/>
    </ligand>
</feature>
<feature type="binding site" evidence="1">
    <location>
        <position position="366"/>
    </location>
    <ligand>
        <name>(2R)-2-phosphoglycerate</name>
        <dbReference type="ChEBI" id="CHEBI:58289"/>
    </ligand>
</feature>
<feature type="binding site" evidence="1">
    <location>
        <position position="367"/>
    </location>
    <ligand>
        <name>(2R)-2-phosphoglycerate</name>
        <dbReference type="ChEBI" id="CHEBI:58289"/>
    </ligand>
</feature>
<feature type="binding site" evidence="1">
    <location>
        <position position="388"/>
    </location>
    <ligand>
        <name>(2R)-2-phosphoglycerate</name>
        <dbReference type="ChEBI" id="CHEBI:58289"/>
    </ligand>
</feature>
<keyword id="KW-0963">Cytoplasm</keyword>
<keyword id="KW-0324">Glycolysis</keyword>
<keyword id="KW-0456">Lyase</keyword>
<keyword id="KW-0460">Magnesium</keyword>
<keyword id="KW-0479">Metal-binding</keyword>
<keyword id="KW-1185">Reference proteome</keyword>
<keyword id="KW-0964">Secreted</keyword>
<protein>
    <recommendedName>
        <fullName evidence="1">Enolase</fullName>
        <ecNumber evidence="1">4.2.1.11</ecNumber>
    </recommendedName>
    <alternativeName>
        <fullName evidence="1">2-phospho-D-glycerate hydro-lyase</fullName>
    </alternativeName>
    <alternativeName>
        <fullName evidence="1">2-phosphoglycerate dehydratase</fullName>
    </alternativeName>
</protein>